<protein>
    <recommendedName>
        <fullName evidence="1">NAD(P)H-quinone oxidoreductase subunit 3, chloroplastic</fullName>
        <ecNumber evidence="1">7.1.1.-</ecNumber>
    </recommendedName>
    <alternativeName>
        <fullName evidence="1">NAD(P)H dehydrogenase subunit 3</fullName>
    </alternativeName>
    <alternativeName>
        <fullName evidence="1">NADH-plastoquinone oxidoreductase subunit 3</fullName>
    </alternativeName>
</protein>
<geneLocation type="chloroplast"/>
<dbReference type="EC" id="7.1.1.-" evidence="1"/>
<dbReference type="EMBL" id="AF494278">
    <property type="protein sequence ID" value="AAM96516.1"/>
    <property type="molecule type" value="Genomic_DNA"/>
</dbReference>
<dbReference type="RefSeq" id="NP_683808.1">
    <property type="nucleotide sequence ID" value="NC_004115.1"/>
</dbReference>
<dbReference type="SMR" id="Q8M9X8"/>
<dbReference type="GeneID" id="860798"/>
<dbReference type="GO" id="GO:0009535">
    <property type="term" value="C:chloroplast thylakoid membrane"/>
    <property type="evidence" value="ECO:0007669"/>
    <property type="project" value="UniProtKB-SubCell"/>
</dbReference>
<dbReference type="GO" id="GO:0030964">
    <property type="term" value="C:NADH dehydrogenase complex"/>
    <property type="evidence" value="ECO:0007669"/>
    <property type="project" value="TreeGrafter"/>
</dbReference>
<dbReference type="GO" id="GO:0008137">
    <property type="term" value="F:NADH dehydrogenase (ubiquinone) activity"/>
    <property type="evidence" value="ECO:0007669"/>
    <property type="project" value="InterPro"/>
</dbReference>
<dbReference type="GO" id="GO:0048038">
    <property type="term" value="F:quinone binding"/>
    <property type="evidence" value="ECO:0007669"/>
    <property type="project" value="UniProtKB-KW"/>
</dbReference>
<dbReference type="GO" id="GO:0019684">
    <property type="term" value="P:photosynthesis, light reaction"/>
    <property type="evidence" value="ECO:0007669"/>
    <property type="project" value="UniProtKB-UniRule"/>
</dbReference>
<dbReference type="FunFam" id="1.20.58.1610:FF:000001">
    <property type="entry name" value="NAD(P)H-quinone oxidoreductase subunit 3, chloroplastic"/>
    <property type="match status" value="1"/>
</dbReference>
<dbReference type="Gene3D" id="1.20.58.1610">
    <property type="entry name" value="NADH:ubiquinone/plastoquinone oxidoreductase, chain 3"/>
    <property type="match status" value="1"/>
</dbReference>
<dbReference type="HAMAP" id="MF_01394">
    <property type="entry name" value="NDH1_NuoA"/>
    <property type="match status" value="1"/>
</dbReference>
<dbReference type="InterPro" id="IPR023043">
    <property type="entry name" value="NAD(P)H_OxRDtase_bac/plastid"/>
</dbReference>
<dbReference type="InterPro" id="IPR000440">
    <property type="entry name" value="NADH_UbQ/plastoQ_OxRdtase_su3"/>
</dbReference>
<dbReference type="InterPro" id="IPR038430">
    <property type="entry name" value="NDAH_ubi_oxred_su3_sf"/>
</dbReference>
<dbReference type="PANTHER" id="PTHR11058">
    <property type="entry name" value="NADH-UBIQUINONE OXIDOREDUCTASE CHAIN 3"/>
    <property type="match status" value="1"/>
</dbReference>
<dbReference type="PANTHER" id="PTHR11058:SF9">
    <property type="entry name" value="NADH-UBIQUINONE OXIDOREDUCTASE CHAIN 3"/>
    <property type="match status" value="1"/>
</dbReference>
<dbReference type="Pfam" id="PF00507">
    <property type="entry name" value="Oxidored_q4"/>
    <property type="match status" value="1"/>
</dbReference>
<keyword id="KW-0150">Chloroplast</keyword>
<keyword id="KW-0472">Membrane</keyword>
<keyword id="KW-0520">NAD</keyword>
<keyword id="KW-0521">NADP</keyword>
<keyword id="KW-0934">Plastid</keyword>
<keyword id="KW-0618">Plastoquinone</keyword>
<keyword id="KW-0874">Quinone</keyword>
<keyword id="KW-0793">Thylakoid</keyword>
<keyword id="KW-1278">Translocase</keyword>
<keyword id="KW-0812">Transmembrane</keyword>
<keyword id="KW-1133">Transmembrane helix</keyword>
<keyword id="KW-0813">Transport</keyword>
<evidence type="ECO:0000255" key="1">
    <source>
        <dbReference type="HAMAP-Rule" id="MF_01394"/>
    </source>
</evidence>
<gene>
    <name evidence="1" type="primary">ndhC</name>
</gene>
<proteinExistence type="inferred from homology"/>
<feature type="chain" id="PRO_0000362817" description="NAD(P)H-quinone oxidoreductase subunit 3, chloroplastic">
    <location>
        <begin position="1"/>
        <end position="120"/>
    </location>
</feature>
<feature type="transmembrane region" description="Helical" evidence="1">
    <location>
        <begin position="10"/>
        <end position="30"/>
    </location>
</feature>
<feature type="transmembrane region" description="Helical" evidence="1">
    <location>
        <begin position="64"/>
        <end position="84"/>
    </location>
</feature>
<feature type="transmembrane region" description="Helical" evidence="1">
    <location>
        <begin position="89"/>
        <end position="109"/>
    </location>
</feature>
<reference key="1">
    <citation type="journal article" date="2002" name="Proc. Natl. Acad. Sci. U.S.A.">
        <title>The chloroplast and mitochondrial genome sequences of the charophyte Chaetosphaeridium globosum: insights into the timing of the events that restructured organelle DNAs within the green algal lineage that led to land plants.</title>
        <authorList>
            <person name="Turmel M."/>
            <person name="Otis C."/>
            <person name="Lemieux C."/>
        </authorList>
    </citation>
    <scope>NUCLEOTIDE SEQUENCE [LARGE SCALE GENOMIC DNA]</scope>
    <source>
        <strain>M1311</strain>
    </source>
</reference>
<organism>
    <name type="scientific">Chaetosphaeridium globosum</name>
    <name type="common">Charophycean green alga</name>
    <name type="synonym">Herposteiron globosum</name>
    <dbReference type="NCBI Taxonomy" id="96477"/>
    <lineage>
        <taxon>Eukaryota</taxon>
        <taxon>Viridiplantae</taxon>
        <taxon>Streptophyta</taxon>
        <taxon>Coleochaetophyceae</taxon>
        <taxon>Coleochaetales</taxon>
        <taxon>Chaetosphaeridiaceae</taxon>
        <taxon>Chaetosphaeridium</taxon>
    </lineage>
</organism>
<sequence length="120" mass="13903">MIVFSKYKTFWFFLIIGAIIPTLAFTTSKLLAPTVTTPEKKTSYESGIEPIGEAWIQFQIRYYMFALVFVIFDVETIFLYPWAMSFDQLGVYGFIEALIFVLILVIGLVYAWRKGALEWS</sequence>
<comment type="function">
    <text evidence="1">NDH shuttles electrons from NAD(P)H:plastoquinone, via FMN and iron-sulfur (Fe-S) centers, to quinones in the photosynthetic chain and possibly in a chloroplast respiratory chain. The immediate electron acceptor for the enzyme in this species is believed to be plastoquinone. Couples the redox reaction to proton translocation, and thus conserves the redox energy in a proton gradient.</text>
</comment>
<comment type="catalytic activity">
    <reaction evidence="1">
        <text>a plastoquinone + NADH + (n+1) H(+)(in) = a plastoquinol + NAD(+) + n H(+)(out)</text>
        <dbReference type="Rhea" id="RHEA:42608"/>
        <dbReference type="Rhea" id="RHEA-COMP:9561"/>
        <dbReference type="Rhea" id="RHEA-COMP:9562"/>
        <dbReference type="ChEBI" id="CHEBI:15378"/>
        <dbReference type="ChEBI" id="CHEBI:17757"/>
        <dbReference type="ChEBI" id="CHEBI:57540"/>
        <dbReference type="ChEBI" id="CHEBI:57945"/>
        <dbReference type="ChEBI" id="CHEBI:62192"/>
    </reaction>
</comment>
<comment type="catalytic activity">
    <reaction evidence="1">
        <text>a plastoquinone + NADPH + (n+1) H(+)(in) = a plastoquinol + NADP(+) + n H(+)(out)</text>
        <dbReference type="Rhea" id="RHEA:42612"/>
        <dbReference type="Rhea" id="RHEA-COMP:9561"/>
        <dbReference type="Rhea" id="RHEA-COMP:9562"/>
        <dbReference type="ChEBI" id="CHEBI:15378"/>
        <dbReference type="ChEBI" id="CHEBI:17757"/>
        <dbReference type="ChEBI" id="CHEBI:57783"/>
        <dbReference type="ChEBI" id="CHEBI:58349"/>
        <dbReference type="ChEBI" id="CHEBI:62192"/>
    </reaction>
</comment>
<comment type="subunit">
    <text evidence="1">NDH is composed of at least 16 different subunits, 5 of which are encoded in the nucleus.</text>
</comment>
<comment type="subcellular location">
    <subcellularLocation>
        <location evidence="1">Plastid</location>
        <location evidence="1">Chloroplast thylakoid membrane</location>
        <topology evidence="1">Multi-pass membrane protein</topology>
    </subcellularLocation>
</comment>
<comment type="similarity">
    <text evidence="1">Belongs to the complex I subunit 3 family.</text>
</comment>
<name>NU3C_CHAGL</name>
<accession>Q8M9X8</accession>